<keyword id="KW-0067">ATP-binding</keyword>
<keyword id="KW-0963">Cytoplasm</keyword>
<keyword id="KW-0227">DNA damage</keyword>
<keyword id="KW-0234">DNA repair</keyword>
<keyword id="KW-0235">DNA replication</keyword>
<keyword id="KW-0238">DNA-binding</keyword>
<keyword id="KW-0547">Nucleotide-binding</keyword>
<keyword id="KW-1185">Reference proteome</keyword>
<keyword id="KW-0742">SOS response</keyword>
<comment type="function">
    <text evidence="1">The RecF protein is involved in DNA metabolism; it is required for DNA replication and normal SOS inducibility. RecF binds preferentially to single-stranded, linear DNA. It also seems to bind ATP.</text>
</comment>
<comment type="subcellular location">
    <subcellularLocation>
        <location evidence="1">Cytoplasm</location>
    </subcellularLocation>
</comment>
<comment type="similarity">
    <text evidence="1">Belongs to the RecF family.</text>
</comment>
<feature type="chain" id="PRO_1000121107" description="DNA replication and repair protein RecF">
    <location>
        <begin position="1"/>
        <end position="360"/>
    </location>
</feature>
<feature type="binding site" evidence="1">
    <location>
        <begin position="30"/>
        <end position="37"/>
    </location>
    <ligand>
        <name>ATP</name>
        <dbReference type="ChEBI" id="CHEBI:30616"/>
    </ligand>
</feature>
<proteinExistence type="inferred from homology"/>
<name>RECF_DESAP</name>
<sequence>MRLTRIKAGNFRNFQHLDVQPAAGLNIVRGRNAQGKTNFIEAVFFALRGHSFRSLRDRELVTWGQESAFVEAELEGKDGRTRVRAELNPAGKKIVWAGEPVGKAELAVRLGTVLFTPDDLSLIKGGPRERRRFLDLELGIFVPGYLTALQLYRRALEQRNHLLRMGGGRRYSELLDLWTDEVCKYGMMLLSGRLEILKEFAPLACRLFGAWAGEELAVRYRSSVGLSNGVRTPGAGDLRETLAAVRQDEIRAGQTQAGPHLDDLAFMVNGKEGRPFASQGQQRSVVLALKLAQVFLWKRHTGEAPVVLLDDLLFEFDRERRDKVLETLQNDVQVFITTGERVLSGSRVFCVHSGNIQEES</sequence>
<dbReference type="EMBL" id="CP000860">
    <property type="protein sequence ID" value="ACA58572.1"/>
    <property type="molecule type" value="Genomic_DNA"/>
</dbReference>
<dbReference type="RefSeq" id="WP_012301166.1">
    <property type="nucleotide sequence ID" value="NC_010424.1"/>
</dbReference>
<dbReference type="SMR" id="B1I1H6"/>
<dbReference type="STRING" id="477974.Daud_0003"/>
<dbReference type="KEGG" id="dau:Daud_0003"/>
<dbReference type="eggNOG" id="COG1195">
    <property type="taxonomic scope" value="Bacteria"/>
</dbReference>
<dbReference type="HOGENOM" id="CLU_040267_0_1_9"/>
<dbReference type="OrthoDB" id="9803889at2"/>
<dbReference type="Proteomes" id="UP000008544">
    <property type="component" value="Chromosome"/>
</dbReference>
<dbReference type="GO" id="GO:0005737">
    <property type="term" value="C:cytoplasm"/>
    <property type="evidence" value="ECO:0007669"/>
    <property type="project" value="UniProtKB-SubCell"/>
</dbReference>
<dbReference type="GO" id="GO:0005524">
    <property type="term" value="F:ATP binding"/>
    <property type="evidence" value="ECO:0007669"/>
    <property type="project" value="UniProtKB-UniRule"/>
</dbReference>
<dbReference type="GO" id="GO:0003697">
    <property type="term" value="F:single-stranded DNA binding"/>
    <property type="evidence" value="ECO:0007669"/>
    <property type="project" value="UniProtKB-UniRule"/>
</dbReference>
<dbReference type="GO" id="GO:0006260">
    <property type="term" value="P:DNA replication"/>
    <property type="evidence" value="ECO:0007669"/>
    <property type="project" value="UniProtKB-UniRule"/>
</dbReference>
<dbReference type="GO" id="GO:0000731">
    <property type="term" value="P:DNA synthesis involved in DNA repair"/>
    <property type="evidence" value="ECO:0007669"/>
    <property type="project" value="TreeGrafter"/>
</dbReference>
<dbReference type="GO" id="GO:0006302">
    <property type="term" value="P:double-strand break repair"/>
    <property type="evidence" value="ECO:0007669"/>
    <property type="project" value="TreeGrafter"/>
</dbReference>
<dbReference type="GO" id="GO:0009432">
    <property type="term" value="P:SOS response"/>
    <property type="evidence" value="ECO:0007669"/>
    <property type="project" value="UniProtKB-UniRule"/>
</dbReference>
<dbReference type="Gene3D" id="3.40.50.300">
    <property type="entry name" value="P-loop containing nucleotide triphosphate hydrolases"/>
    <property type="match status" value="1"/>
</dbReference>
<dbReference type="Gene3D" id="1.20.1050.90">
    <property type="entry name" value="RecF/RecN/SMC, N-terminal domain"/>
    <property type="match status" value="1"/>
</dbReference>
<dbReference type="HAMAP" id="MF_00365">
    <property type="entry name" value="RecF"/>
    <property type="match status" value="1"/>
</dbReference>
<dbReference type="InterPro" id="IPR001238">
    <property type="entry name" value="DNA-binding_RecF"/>
</dbReference>
<dbReference type="InterPro" id="IPR018078">
    <property type="entry name" value="DNA-binding_RecF_CS"/>
</dbReference>
<dbReference type="InterPro" id="IPR027417">
    <property type="entry name" value="P-loop_NTPase"/>
</dbReference>
<dbReference type="InterPro" id="IPR003395">
    <property type="entry name" value="RecF/RecN/SMC_N"/>
</dbReference>
<dbReference type="InterPro" id="IPR042174">
    <property type="entry name" value="RecF_2"/>
</dbReference>
<dbReference type="NCBIfam" id="TIGR00611">
    <property type="entry name" value="recf"/>
    <property type="match status" value="1"/>
</dbReference>
<dbReference type="PANTHER" id="PTHR32182">
    <property type="entry name" value="DNA REPLICATION AND REPAIR PROTEIN RECF"/>
    <property type="match status" value="1"/>
</dbReference>
<dbReference type="PANTHER" id="PTHR32182:SF0">
    <property type="entry name" value="DNA REPLICATION AND REPAIR PROTEIN RECF"/>
    <property type="match status" value="1"/>
</dbReference>
<dbReference type="Pfam" id="PF02463">
    <property type="entry name" value="SMC_N"/>
    <property type="match status" value="1"/>
</dbReference>
<dbReference type="SUPFAM" id="SSF52540">
    <property type="entry name" value="P-loop containing nucleoside triphosphate hydrolases"/>
    <property type="match status" value="1"/>
</dbReference>
<dbReference type="PROSITE" id="PS00617">
    <property type="entry name" value="RECF_1"/>
    <property type="match status" value="1"/>
</dbReference>
<gene>
    <name evidence="1" type="primary">recF</name>
    <name type="ordered locus">Daud_0003</name>
</gene>
<reference key="1">
    <citation type="submission" date="2007-10" db="EMBL/GenBank/DDBJ databases">
        <title>Complete sequence of chromosome of Desulforudis audaxviator MP104C.</title>
        <authorList>
            <person name="Copeland A."/>
            <person name="Lucas S."/>
            <person name="Lapidus A."/>
            <person name="Barry K."/>
            <person name="Glavina del Rio T."/>
            <person name="Dalin E."/>
            <person name="Tice H."/>
            <person name="Bruce D."/>
            <person name="Pitluck S."/>
            <person name="Lowry S.R."/>
            <person name="Larimer F."/>
            <person name="Land M.L."/>
            <person name="Hauser L."/>
            <person name="Kyrpides N."/>
            <person name="Ivanova N.N."/>
            <person name="Richardson P."/>
        </authorList>
    </citation>
    <scope>NUCLEOTIDE SEQUENCE [LARGE SCALE GENOMIC DNA]</scope>
    <source>
        <strain>MP104C</strain>
    </source>
</reference>
<organism>
    <name type="scientific">Desulforudis audaxviator (strain MP104C)</name>
    <dbReference type="NCBI Taxonomy" id="477974"/>
    <lineage>
        <taxon>Bacteria</taxon>
        <taxon>Bacillati</taxon>
        <taxon>Bacillota</taxon>
        <taxon>Clostridia</taxon>
        <taxon>Thermoanaerobacterales</taxon>
        <taxon>Candidatus Desulforudaceae</taxon>
        <taxon>Candidatus Desulforudis</taxon>
    </lineage>
</organism>
<protein>
    <recommendedName>
        <fullName evidence="1">DNA replication and repair protein RecF</fullName>
    </recommendedName>
</protein>
<evidence type="ECO:0000255" key="1">
    <source>
        <dbReference type="HAMAP-Rule" id="MF_00365"/>
    </source>
</evidence>
<accession>B1I1H6</accession>